<reference key="1">
    <citation type="journal article" date="2012" name="BMC Genomics">
        <title>Comparative genomics and transcriptomics of lineages I, II, and III strains of Listeria monocytogenes.</title>
        <authorList>
            <person name="Hain T."/>
            <person name="Ghai R."/>
            <person name="Billion A."/>
            <person name="Kuenne C.T."/>
            <person name="Steinweg C."/>
            <person name="Izar B."/>
            <person name="Mohamed W."/>
            <person name="Mraheil M."/>
            <person name="Domann E."/>
            <person name="Schaffrath S."/>
            <person name="Karst U."/>
            <person name="Goesmann A."/>
            <person name="Oehm S."/>
            <person name="Puhler A."/>
            <person name="Merkl R."/>
            <person name="Vorwerk S."/>
            <person name="Glaser P."/>
            <person name="Garrido P."/>
            <person name="Rusniok C."/>
            <person name="Buchrieser C."/>
            <person name="Goebel W."/>
            <person name="Chakraborty T."/>
        </authorList>
    </citation>
    <scope>NUCLEOTIDE SEQUENCE [LARGE SCALE GENOMIC DNA]</scope>
    <source>
        <strain>CLIP80459</strain>
    </source>
</reference>
<feature type="chain" id="PRO_1000215995" description="Transcription factor FapR">
    <location>
        <begin position="1"/>
        <end position="189"/>
    </location>
</feature>
<comment type="function">
    <text evidence="1">Transcriptional factor involved in regulation of membrane lipid biosynthesis by repressing genes involved in fatty acid and phospholipid metabolism.</text>
</comment>
<comment type="similarity">
    <text evidence="1">Belongs to the FapR family.</text>
</comment>
<proteinExistence type="inferred from homology"/>
<dbReference type="EMBL" id="FM242711">
    <property type="protein sequence ID" value="CAS05584.1"/>
    <property type="molecule type" value="Genomic_DNA"/>
</dbReference>
<dbReference type="RefSeq" id="WP_003723871.1">
    <property type="nucleotide sequence ID" value="NC_012488.1"/>
</dbReference>
<dbReference type="SMR" id="C1KWA9"/>
<dbReference type="KEGG" id="lmc:Lm4b_01826"/>
<dbReference type="HOGENOM" id="CLU_095708_0_0_9"/>
<dbReference type="GO" id="GO:0003677">
    <property type="term" value="F:DNA binding"/>
    <property type="evidence" value="ECO:0007669"/>
    <property type="project" value="UniProtKB-KW"/>
</dbReference>
<dbReference type="GO" id="GO:0003700">
    <property type="term" value="F:DNA-binding transcription factor activity"/>
    <property type="evidence" value="ECO:0007669"/>
    <property type="project" value="UniProtKB-UniRule"/>
</dbReference>
<dbReference type="GO" id="GO:0006633">
    <property type="term" value="P:fatty acid biosynthetic process"/>
    <property type="evidence" value="ECO:0007669"/>
    <property type="project" value="UniProtKB-KW"/>
</dbReference>
<dbReference type="GO" id="GO:0045892">
    <property type="term" value="P:negative regulation of DNA-templated transcription"/>
    <property type="evidence" value="ECO:0007669"/>
    <property type="project" value="UniProtKB-UniRule"/>
</dbReference>
<dbReference type="GO" id="GO:0045717">
    <property type="term" value="P:negative regulation of fatty acid biosynthetic process"/>
    <property type="evidence" value="ECO:0007669"/>
    <property type="project" value="UniProtKB-UniRule"/>
</dbReference>
<dbReference type="CDD" id="cd03440">
    <property type="entry name" value="hot_dog"/>
    <property type="match status" value="1"/>
</dbReference>
<dbReference type="Gene3D" id="3.10.129.10">
    <property type="entry name" value="Hotdog Thioesterase"/>
    <property type="match status" value="1"/>
</dbReference>
<dbReference type="Gene3D" id="1.10.10.10">
    <property type="entry name" value="Winged helix-like DNA-binding domain superfamily/Winged helix DNA-binding domain"/>
    <property type="match status" value="1"/>
</dbReference>
<dbReference type="HAMAP" id="MF_01814">
    <property type="entry name" value="Transcrip_fact_FapR"/>
    <property type="match status" value="1"/>
</dbReference>
<dbReference type="InterPro" id="IPR029069">
    <property type="entry name" value="HotDog_dom_sf"/>
</dbReference>
<dbReference type="InterPro" id="IPR017275">
    <property type="entry name" value="Transcription_factor_FapR"/>
</dbReference>
<dbReference type="InterPro" id="IPR036388">
    <property type="entry name" value="WH-like_DNA-bd_sf"/>
</dbReference>
<dbReference type="NCBIfam" id="NF003359">
    <property type="entry name" value="PRK04424.1"/>
    <property type="match status" value="1"/>
</dbReference>
<dbReference type="PIRSF" id="PIRSF037733">
    <property type="entry name" value="Transcription_factor_FapR"/>
    <property type="match status" value="1"/>
</dbReference>
<dbReference type="SUPFAM" id="SSF54637">
    <property type="entry name" value="Thioesterase/thiol ester dehydrase-isomerase"/>
    <property type="match status" value="1"/>
</dbReference>
<sequence>MKKYSKKDRQMKLQVAIEENPFITDEQLAEKFGVSVQTIRLDRVALSIPELRERIKHVASVNYADAVKSLPIDEVIGEIIDIQLSKSAISIFDVRSEHVFKRNKIARGHHLFAQANSLATAVIPNEIALTTQATVRFVRSVNEGERIIAKAKVRPATDNRAITIVDVKSYVGDEIVLKGKFEMYHATQK</sequence>
<organism>
    <name type="scientific">Listeria monocytogenes serotype 4b (strain CLIP80459)</name>
    <dbReference type="NCBI Taxonomy" id="568819"/>
    <lineage>
        <taxon>Bacteria</taxon>
        <taxon>Bacillati</taxon>
        <taxon>Bacillota</taxon>
        <taxon>Bacilli</taxon>
        <taxon>Bacillales</taxon>
        <taxon>Listeriaceae</taxon>
        <taxon>Listeria</taxon>
    </lineage>
</organism>
<keyword id="KW-0238">DNA-binding</keyword>
<keyword id="KW-0275">Fatty acid biosynthesis</keyword>
<keyword id="KW-0276">Fatty acid metabolism</keyword>
<keyword id="KW-0444">Lipid biosynthesis</keyword>
<keyword id="KW-0443">Lipid metabolism</keyword>
<keyword id="KW-0678">Repressor</keyword>
<keyword id="KW-0804">Transcription</keyword>
<keyword id="KW-0805">Transcription regulation</keyword>
<name>FAPR_LISMC</name>
<gene>
    <name evidence="1" type="primary">fapR</name>
    <name type="ordered locus">Lm4b_01826</name>
</gene>
<evidence type="ECO:0000255" key="1">
    <source>
        <dbReference type="HAMAP-Rule" id="MF_01814"/>
    </source>
</evidence>
<protein>
    <recommendedName>
        <fullName evidence="1">Transcription factor FapR</fullName>
    </recommendedName>
    <alternativeName>
        <fullName evidence="1">Fatty acid and phospholipid biosynthesis regulator</fullName>
    </alternativeName>
</protein>
<accession>C1KWA9</accession>